<name>PIF3_TRYB2</name>
<reference key="1">
    <citation type="journal article" date="2005" name="Science">
        <title>The genome of the African trypanosome Trypanosoma brucei.</title>
        <authorList>
            <person name="Berriman M."/>
            <person name="Ghedin E."/>
            <person name="Hertz-Fowler C."/>
            <person name="Blandin G."/>
            <person name="Renauld H."/>
            <person name="Bartholomeu D.C."/>
            <person name="Lennard N.J."/>
            <person name="Caler E."/>
            <person name="Hamlin N.E."/>
            <person name="Haas B."/>
            <person name="Bohme U."/>
            <person name="Hannick L."/>
            <person name="Aslett M.A."/>
            <person name="Shallom J."/>
            <person name="Marcello L."/>
            <person name="Hou L."/>
            <person name="Wickstead B."/>
            <person name="Alsmark U.C.M."/>
            <person name="Arrowsmith C."/>
            <person name="Atkin R.J."/>
            <person name="Barron A.J."/>
            <person name="Bringaud F."/>
            <person name="Brooks K."/>
            <person name="Carrington M."/>
            <person name="Cherevach I."/>
            <person name="Chillingworth T.J."/>
            <person name="Churcher C."/>
            <person name="Clark L.N."/>
            <person name="Corton C.H."/>
            <person name="Cronin A."/>
            <person name="Davies R.M."/>
            <person name="Doggett J."/>
            <person name="Djikeng A."/>
            <person name="Feldblyum T."/>
            <person name="Field M.C."/>
            <person name="Fraser A."/>
            <person name="Goodhead I."/>
            <person name="Hance Z."/>
            <person name="Harper D."/>
            <person name="Harris B.R."/>
            <person name="Hauser H."/>
            <person name="Hostetler J."/>
            <person name="Ivens A."/>
            <person name="Jagels K."/>
            <person name="Johnson D."/>
            <person name="Johnson J."/>
            <person name="Jones K."/>
            <person name="Kerhornou A.X."/>
            <person name="Koo H."/>
            <person name="Larke N."/>
            <person name="Landfear S."/>
            <person name="Larkin C."/>
            <person name="Leech V."/>
            <person name="Line A."/>
            <person name="Lord A."/>
            <person name="Macleod A."/>
            <person name="Mooney P.J."/>
            <person name="Moule S."/>
            <person name="Martin D.M."/>
            <person name="Morgan G.W."/>
            <person name="Mungall K."/>
            <person name="Norbertczak H."/>
            <person name="Ormond D."/>
            <person name="Pai G."/>
            <person name="Peacock C.S."/>
            <person name="Peterson J."/>
            <person name="Quail M.A."/>
            <person name="Rabbinowitsch E."/>
            <person name="Rajandream M.A."/>
            <person name="Reitter C."/>
            <person name="Salzberg S.L."/>
            <person name="Sanders M."/>
            <person name="Schobel S."/>
            <person name="Sharp S."/>
            <person name="Simmonds M."/>
            <person name="Simpson A.J."/>
            <person name="Tallon L."/>
            <person name="Turner C.M."/>
            <person name="Tait A."/>
            <person name="Tivey A.R."/>
            <person name="Van Aken S."/>
            <person name="Walker D."/>
            <person name="Wanless D."/>
            <person name="Wang S."/>
            <person name="White B."/>
            <person name="White O."/>
            <person name="Whitehead S."/>
            <person name="Woodward J."/>
            <person name="Wortman J."/>
            <person name="Adams M.D."/>
            <person name="Embley T.M."/>
            <person name="Gull K."/>
            <person name="Ullu E."/>
            <person name="Barry J.D."/>
            <person name="Fairlamb A.H."/>
            <person name="Opperdoes F."/>
            <person name="Barrell B.G."/>
            <person name="Donelson J.E."/>
            <person name="Hall N."/>
            <person name="Fraser C.M."/>
            <person name="Melville S.E."/>
            <person name="El-Sayed N.M.A."/>
        </authorList>
    </citation>
    <scope>NUCLEOTIDE SEQUENCE [LARGE SCALE GENOMIC DNA]</scope>
    <source>
        <strain evidence="8">927/4 GUTat10.1</strain>
    </source>
</reference>
<reference key="2">
    <citation type="journal article" date="2009" name="Mol. Cell">
        <title>Trypanosomes have six mitochondrial DNA helicases with one controlling kinetoplast maxicircle replication.</title>
        <authorList>
            <person name="Liu B."/>
            <person name="Wang J."/>
            <person name="Yaffe N."/>
            <person name="Lindsay M.E."/>
            <person name="Zhao Z."/>
            <person name="Zick A."/>
            <person name="Shlomai J."/>
            <person name="Englund P.T."/>
        </authorList>
    </citation>
    <scope>SUBCELLULAR LOCATION</scope>
    <scope>DISRUPTION PHENOTYPE</scope>
</reference>
<comment type="function">
    <text evidence="2">DNA-dependent ATPase and 5'-3' DNA helicase required for the maintenance of genome stability.</text>
</comment>
<comment type="catalytic activity">
    <reaction evidence="2">
        <text>Couples ATP hydrolysis with the unwinding of duplex DNA at the replication fork by translocating in the 5'-3' direction. This creates two antiparallel DNA single strands (ssDNA). The leading ssDNA polymer is the template for DNA polymerase III holoenzyme which synthesizes a continuous strand.</text>
        <dbReference type="EC" id="5.6.2.3"/>
    </reaction>
</comment>
<comment type="catalytic activity">
    <reaction evidence="2">
        <text>ATP + H2O = ADP + phosphate + H(+)</text>
        <dbReference type="Rhea" id="RHEA:13065"/>
        <dbReference type="ChEBI" id="CHEBI:15377"/>
        <dbReference type="ChEBI" id="CHEBI:15378"/>
        <dbReference type="ChEBI" id="CHEBI:30616"/>
        <dbReference type="ChEBI" id="CHEBI:43474"/>
        <dbReference type="ChEBI" id="CHEBI:456216"/>
        <dbReference type="EC" id="5.6.2.3"/>
    </reaction>
</comment>
<comment type="cofactor">
    <cofactor evidence="2">
        <name>Mg(2+)</name>
        <dbReference type="ChEBI" id="CHEBI:18420"/>
    </cofactor>
</comment>
<comment type="subunit">
    <text evidence="1 3">Monomer.</text>
</comment>
<comment type="subcellular location">
    <subcellularLocation>
        <location evidence="5">Cytoplasm</location>
    </subcellularLocation>
</comment>
<comment type="disruption phenotype">
    <text evidence="5">No growth phenotype.</text>
</comment>
<comment type="similarity">
    <text evidence="7">Belongs to the helicase family. PIF1 subfamily.</text>
</comment>
<protein>
    <recommendedName>
        <fullName evidence="6">ATP-dependent DNA helicase PIF3</fullName>
        <ecNumber evidence="2">5.6.2.3</ecNumber>
    </recommendedName>
    <alternativeName>
        <fullName evidence="7">DNA 5'-3' helicase PIF3</fullName>
    </alternativeName>
    <alternativeName>
        <fullName>DNA repair and recombination helicase PIF3</fullName>
    </alternativeName>
</protein>
<evidence type="ECO:0000250" key="1"/>
<evidence type="ECO:0000250" key="2">
    <source>
        <dbReference type="UniProtKB" id="Q384Y0"/>
    </source>
</evidence>
<evidence type="ECO:0000250" key="3">
    <source>
        <dbReference type="UniProtKB" id="Q9H611"/>
    </source>
</evidence>
<evidence type="ECO:0000255" key="4"/>
<evidence type="ECO:0000269" key="5">
    <source>
    </source>
</evidence>
<evidence type="ECO:0000303" key="6">
    <source>
    </source>
</evidence>
<evidence type="ECO:0000305" key="7"/>
<evidence type="ECO:0000312" key="8">
    <source>
        <dbReference type="Proteomes" id="UP000008524"/>
    </source>
</evidence>
<keyword id="KW-0067">ATP-binding</keyword>
<keyword id="KW-0963">Cytoplasm</keyword>
<keyword id="KW-0227">DNA damage</keyword>
<keyword id="KW-0233">DNA recombination</keyword>
<keyword id="KW-0234">DNA repair</keyword>
<keyword id="KW-0238">DNA-binding</keyword>
<keyword id="KW-0347">Helicase</keyword>
<keyword id="KW-0378">Hydrolase</keyword>
<keyword id="KW-0413">Isomerase</keyword>
<keyword id="KW-0547">Nucleotide-binding</keyword>
<keyword id="KW-1185">Reference proteome</keyword>
<gene>
    <name evidence="6" type="primary">PIF3</name>
    <name type="ORF">Tb11.01.3660</name>
</gene>
<organism>
    <name type="scientific">Trypanosoma brucei brucei (strain 927/4 GUTat10.1)</name>
    <dbReference type="NCBI Taxonomy" id="185431"/>
    <lineage>
        <taxon>Eukaryota</taxon>
        <taxon>Discoba</taxon>
        <taxon>Euglenozoa</taxon>
        <taxon>Kinetoplastea</taxon>
        <taxon>Metakinetoplastina</taxon>
        <taxon>Trypanosomatida</taxon>
        <taxon>Trypanosomatidae</taxon>
        <taxon>Trypanosoma</taxon>
    </lineage>
</organism>
<dbReference type="EC" id="5.6.2.3" evidence="2"/>
<dbReference type="EMBL" id="CH464491">
    <property type="protein sequence ID" value="EAN80130.1"/>
    <property type="molecule type" value="Genomic_DNA"/>
</dbReference>
<dbReference type="RefSeq" id="XP_829242.1">
    <property type="nucleotide sequence ID" value="XM_824149.1"/>
</dbReference>
<dbReference type="STRING" id="185431.Q383A1"/>
<dbReference type="PaxDb" id="5691-EAN80130"/>
<dbReference type="GeneID" id="3665724"/>
<dbReference type="KEGG" id="tbr:Tb11.01.3660"/>
<dbReference type="eggNOG" id="KOG0987">
    <property type="taxonomic scope" value="Eukaryota"/>
</dbReference>
<dbReference type="InParanoid" id="Q383A1"/>
<dbReference type="OrthoDB" id="432234at2759"/>
<dbReference type="Proteomes" id="UP000008524">
    <property type="component" value="Chromosome 11 Scaffold 1"/>
</dbReference>
<dbReference type="GO" id="GO:0005737">
    <property type="term" value="C:cytoplasm"/>
    <property type="evidence" value="ECO:0000314"/>
    <property type="project" value="GeneDB"/>
</dbReference>
<dbReference type="GO" id="GO:0005739">
    <property type="term" value="C:mitochondrion"/>
    <property type="evidence" value="ECO:0000318"/>
    <property type="project" value="GO_Central"/>
</dbReference>
<dbReference type="GO" id="GO:0031981">
    <property type="term" value="C:nuclear lumen"/>
    <property type="evidence" value="ECO:0000318"/>
    <property type="project" value="GO_Central"/>
</dbReference>
<dbReference type="GO" id="GO:0043139">
    <property type="term" value="F:5'-3' DNA helicase activity"/>
    <property type="evidence" value="ECO:0000318"/>
    <property type="project" value="GO_Central"/>
</dbReference>
<dbReference type="GO" id="GO:0005524">
    <property type="term" value="F:ATP binding"/>
    <property type="evidence" value="ECO:0000314"/>
    <property type="project" value="GeneDB"/>
</dbReference>
<dbReference type="GO" id="GO:0016887">
    <property type="term" value="F:ATP hydrolysis activity"/>
    <property type="evidence" value="ECO:0007669"/>
    <property type="project" value="InterPro"/>
</dbReference>
<dbReference type="GO" id="GO:0003677">
    <property type="term" value="F:DNA binding"/>
    <property type="evidence" value="ECO:0007669"/>
    <property type="project" value="UniProtKB-KW"/>
</dbReference>
<dbReference type="GO" id="GO:0000287">
    <property type="term" value="F:magnesium ion binding"/>
    <property type="evidence" value="ECO:0000314"/>
    <property type="project" value="GeneDB"/>
</dbReference>
<dbReference type="GO" id="GO:0051276">
    <property type="term" value="P:chromosome organization"/>
    <property type="evidence" value="ECO:0000247"/>
    <property type="project" value="GeneDB"/>
</dbReference>
<dbReference type="GO" id="GO:0006310">
    <property type="term" value="P:DNA recombination"/>
    <property type="evidence" value="ECO:0000247"/>
    <property type="project" value="GeneDB"/>
</dbReference>
<dbReference type="GO" id="GO:0006281">
    <property type="term" value="P:DNA repair"/>
    <property type="evidence" value="ECO:0007669"/>
    <property type="project" value="UniProtKB-KW"/>
</dbReference>
<dbReference type="GO" id="GO:0000723">
    <property type="term" value="P:telomere maintenance"/>
    <property type="evidence" value="ECO:0000247"/>
    <property type="project" value="GeneDB"/>
</dbReference>
<dbReference type="CDD" id="cd18037">
    <property type="entry name" value="DEXSc_Pif1_like"/>
    <property type="match status" value="1"/>
</dbReference>
<dbReference type="FunFam" id="3.40.50.300:FF:001824">
    <property type="entry name" value="ATP-dependent DNA helicase"/>
    <property type="match status" value="1"/>
</dbReference>
<dbReference type="Gene3D" id="3.40.50.300">
    <property type="entry name" value="P-loop containing nucleotide triphosphate hydrolases"/>
    <property type="match status" value="1"/>
</dbReference>
<dbReference type="InterPro" id="IPR003593">
    <property type="entry name" value="AAA+_ATPase"/>
</dbReference>
<dbReference type="InterPro" id="IPR010285">
    <property type="entry name" value="DNA_helicase_pif1-like_DEAD"/>
</dbReference>
<dbReference type="InterPro" id="IPR027417">
    <property type="entry name" value="P-loop_NTPase"/>
</dbReference>
<dbReference type="InterPro" id="IPR051055">
    <property type="entry name" value="PIF1_helicase"/>
</dbReference>
<dbReference type="PANTHER" id="PTHR47642">
    <property type="entry name" value="ATP-DEPENDENT DNA HELICASE"/>
    <property type="match status" value="1"/>
</dbReference>
<dbReference type="Pfam" id="PF05970">
    <property type="entry name" value="PIF1"/>
    <property type="match status" value="1"/>
</dbReference>
<dbReference type="SMART" id="SM00382">
    <property type="entry name" value="AAA"/>
    <property type="match status" value="1"/>
</dbReference>
<dbReference type="SUPFAM" id="SSF52540">
    <property type="entry name" value="P-loop containing nucleoside triphosphate hydrolases"/>
    <property type="match status" value="2"/>
</dbReference>
<feature type="chain" id="PRO_0000423749" description="ATP-dependent DNA helicase PIF3">
    <location>
        <begin position="1"/>
        <end position="812"/>
    </location>
</feature>
<feature type="DNA-binding region" evidence="4">
    <location>
        <begin position="741"/>
        <end position="761"/>
    </location>
</feature>
<feature type="binding site" evidence="4">
    <location>
        <begin position="247"/>
        <end position="254"/>
    </location>
    <ligand>
        <name>ATP</name>
        <dbReference type="ChEBI" id="CHEBI:30616"/>
    </ligand>
</feature>
<accession>Q383A1</accession>
<proteinExistence type="inferred from homology"/>
<sequence>MRLAAESSLVFFVSHFYFERFFSFVMVAYTLDTLFASDIDSATLFYSEGCGPIRLVALSAQMRRLVRLGPIRVAKACVEVRPMAPTKEFFEEGRQLQHIEAAGVGDFPDSERSGDTFVNPFTGRLTPTWGRVAKELFSLGFEHSIVNPFRLVWNPTKAALVSDAALQPFRTSTVTWRRNLAALLSRRDAADAVGEEIHRLYNEITSAYLPPKLDTMHDPRLSTMTMTPDQQNVIRCALRGYSMFIGGSAGTGKTVLLKAIHRKLTEMGLRVAMTATTGVASVQLGGCTFHLAFGVPIKGEEGTRKRWDSNAFRAVDVVIIDEVSLLDAELFETFEEEARMARLQQSPFGGLQVIACGDFLQLAMMDVSIGGPCYQSHAFRHLIPVCLVTSMRQAQGDPFCELLGQLRVGKFDKKAFKALDRPVSGDANNVTYIFPRRCDAQRLNDEKLCELRSEEMIFAPQRGPLQLVGNFTPAGLVDWGRKKDFPKREKIITVLSEEIKRITGVDIVDHNIVVMPAGGEKNAVLIRLRHSEDRNVLICKNGGSKEHGASNEGGAEESHWRAILEATAGRLKGKLHQIYNQDPHNFIPPSVSLMLADASLHPNAELISPLRLKLGCRVMINRNLSRTVSNGSVGIVEAFAAPNLDLFPRRHETSPKAFHTWSLERNGFQRLPIVRLLSGEVVQLPPLSVMIGGTPSTYFYGHELFVLPLQLGYGFTVHKVQGLTLEGTVVLDCKKFFECPHLVYVACSRVRSMDQLIVRNVRSDMIIVRQSALDFTNALRDASVMSSLDPPDGCTRASWVRRLSPLLVGLTD</sequence>